<dbReference type="EMBL" id="M20869">
    <property type="protein sequence ID" value="AAA46256.1"/>
    <property type="molecule type" value="Genomic_RNA"/>
</dbReference>
<dbReference type="EMBL" id="AY847350">
    <property type="protein sequence ID" value="AAX49341.1"/>
    <property type="molecule type" value="Genomic_RNA"/>
</dbReference>
<dbReference type="EMBL" id="DQ361065">
    <property type="protein sequence ID" value="ABC96001.2"/>
    <property type="molecule type" value="Genomic_RNA"/>
</dbReference>
<dbReference type="PIR" id="A28920">
    <property type="entry name" value="VGXPLA"/>
</dbReference>
<dbReference type="PIR" id="B26345">
    <property type="entry name" value="VGXPLM"/>
</dbReference>
<dbReference type="RefSeq" id="NP_694851.1">
    <property type="nucleotide sequence ID" value="NC_004294.1"/>
</dbReference>
<dbReference type="PDB" id="5JWD">
    <property type="method" value="X-ray"/>
    <property type="resolution" value="2.50 A"/>
    <property type="chains" value="C=392-400"/>
</dbReference>
<dbReference type="PDB" id="5JWE">
    <property type="method" value="X-ray"/>
    <property type="resolution" value="2.40 A"/>
    <property type="chains" value="P/Q/R/S=92-101"/>
</dbReference>
<dbReference type="PDB" id="7P0A">
    <property type="method" value="X-ray"/>
    <property type="resolution" value="2.43 A"/>
    <property type="chains" value="C/F=33-41"/>
</dbReference>
<dbReference type="PDB" id="7P0T">
    <property type="method" value="X-ray"/>
    <property type="resolution" value="2.60 A"/>
    <property type="chains" value="C/F=33-40"/>
</dbReference>
<dbReference type="PDBsum" id="5JWD"/>
<dbReference type="PDBsum" id="5JWE"/>
<dbReference type="PDBsum" id="7P0A"/>
<dbReference type="PDBsum" id="7P0T"/>
<dbReference type="EMDB" id="EMD-27538"/>
<dbReference type="EMDB" id="EMD-27539"/>
<dbReference type="SMR" id="P09991"/>
<dbReference type="TCDB" id="1.G.8.1.1">
    <property type="family name" value="the arenavirus fusion protein (av-fp) family"/>
</dbReference>
<dbReference type="GlyCosmos" id="P09991">
    <property type="glycosylation" value="9 sites, No reported glycans"/>
</dbReference>
<dbReference type="KEGG" id="vg:956591"/>
<dbReference type="Proteomes" id="UP000002474">
    <property type="component" value="Genome"/>
</dbReference>
<dbReference type="Proteomes" id="UP000121528">
    <property type="component" value="Genome"/>
</dbReference>
<dbReference type="Proteomes" id="UP000204492">
    <property type="component" value="Genome"/>
</dbReference>
<dbReference type="GO" id="GO:0044167">
    <property type="term" value="C:host cell endoplasmic reticulum membrane"/>
    <property type="evidence" value="ECO:0007669"/>
    <property type="project" value="UniProtKB-SubCell"/>
</dbReference>
<dbReference type="GO" id="GO:0044178">
    <property type="term" value="C:host cell Golgi membrane"/>
    <property type="evidence" value="ECO:0007669"/>
    <property type="project" value="UniProtKB-SubCell"/>
</dbReference>
<dbReference type="GO" id="GO:0020002">
    <property type="term" value="C:host cell plasma membrane"/>
    <property type="evidence" value="ECO:0007669"/>
    <property type="project" value="UniProtKB-SubCell"/>
</dbReference>
<dbReference type="GO" id="GO:0016020">
    <property type="term" value="C:membrane"/>
    <property type="evidence" value="ECO:0007669"/>
    <property type="project" value="UniProtKB-UniRule"/>
</dbReference>
<dbReference type="GO" id="GO:0019031">
    <property type="term" value="C:viral envelope"/>
    <property type="evidence" value="ECO:0007669"/>
    <property type="project" value="UniProtKB-UniRule"/>
</dbReference>
<dbReference type="GO" id="GO:0055036">
    <property type="term" value="C:virion membrane"/>
    <property type="evidence" value="ECO:0007669"/>
    <property type="project" value="UniProtKB-SubCell"/>
</dbReference>
<dbReference type="GO" id="GO:0046872">
    <property type="term" value="F:metal ion binding"/>
    <property type="evidence" value="ECO:0007669"/>
    <property type="project" value="UniProtKB-KW"/>
</dbReference>
<dbReference type="GO" id="GO:0039654">
    <property type="term" value="P:fusion of virus membrane with host endosome membrane"/>
    <property type="evidence" value="ECO:0007669"/>
    <property type="project" value="UniProtKB-UniRule"/>
</dbReference>
<dbReference type="GO" id="GO:0019065">
    <property type="term" value="P:receptor-mediated endocytosis of virus by host cell"/>
    <property type="evidence" value="ECO:0007669"/>
    <property type="project" value="UniProtKB-UniRule"/>
</dbReference>
<dbReference type="GO" id="GO:0019062">
    <property type="term" value="P:virion attachment to host cell"/>
    <property type="evidence" value="ECO:0007669"/>
    <property type="project" value="UniProtKB-UniRule"/>
</dbReference>
<dbReference type="Gene3D" id="6.10.140.1590">
    <property type="match status" value="1"/>
</dbReference>
<dbReference type="Gene3D" id="2.20.28.180">
    <property type="entry name" value="Arenavirus glycoprotein, zinc binding domain"/>
    <property type="match status" value="1"/>
</dbReference>
<dbReference type="HAMAP" id="MF_04084">
    <property type="entry name" value="ARENA_GPC"/>
    <property type="match status" value="1"/>
</dbReference>
<dbReference type="InterPro" id="IPR001535">
    <property type="entry name" value="Arena_glycoprot"/>
</dbReference>
<dbReference type="InterPro" id="IPR043015">
    <property type="entry name" value="Arena_glycoprot_zinc-bd"/>
</dbReference>
<dbReference type="Pfam" id="PF00798">
    <property type="entry name" value="Arena_glycoprot"/>
    <property type="match status" value="1"/>
</dbReference>
<dbReference type="PIRSF" id="PIRSF004028">
    <property type="entry name" value="GPC_ArenaV"/>
    <property type="match status" value="1"/>
</dbReference>
<name>GLYC_LYCVA</name>
<proteinExistence type="evidence at protein level"/>
<protein>
    <recommendedName>
        <fullName evidence="2">Pre-glycoprotein polyprotein GP complex</fullName>
        <shortName evidence="2">Pre-GP-C</shortName>
    </recommendedName>
    <component>
        <recommendedName>
            <fullName evidence="2">Stable signal peptide</fullName>
            <shortName evidence="2">SSP</shortName>
        </recommendedName>
    </component>
    <component>
        <recommendedName>
            <fullName evidence="2">Glycoprotein G1</fullName>
            <shortName evidence="2">GP1</shortName>
        </recommendedName>
    </component>
    <component>
        <recommendedName>
            <fullName evidence="2">Glycoprotein G2</fullName>
            <shortName evidence="2">GP2</shortName>
        </recommendedName>
    </component>
</protein>
<comment type="function">
    <molecule>Stable signal peptide</molecule>
    <text evidence="2 5">Functions as a cleaved signal peptide that is retained as the third component of the GP complex (GP-C). Helps to stabilize the spike complex in its native conformation. The SSP is required for efficient glycoprotein expression, post-translational maturation cleavage of G1 and G2, glycoprotein transport to the cell surface plasma membrane, formation of infectious virus particles, and acid pH-dependent glycoprotein-mediated cell fusion (PubMed:17376927).</text>
</comment>
<comment type="function">
    <molecule>Glycoprotein G1</molecule>
    <text evidence="2 7 9">Forms the virion spikes together with glycoprotein G2. The glycoprotein spike trimers are connected to the underlying matrix. Interacts with the host receptor (By similarity). Mediates virus attachment to the host primary receptor alpha-dystroglycan DAG1 (alpha-DG) at the cell surface (PubMed:9851928). Down-modulates host DAG1 (PubMed:17761532).</text>
</comment>
<comment type="function">
    <molecule>Glycoprotein G2</molecule>
    <text evidence="2 4">Forms the virion spikes together with glycoprotein G1. The glycoprotein spike trimers are connected to the underlying matrix. Class I viral fusion protein that directs fusion of viral and host endosomal membranes, leading to delivery of the nucleocapsid into the cytoplasm (PubMed:16731928). Membrane fusion is mediated by irreversible conformational changes induced by acidification.</text>
</comment>
<comment type="subunit">
    <molecule>Stable signal peptide</molecule>
    <text evidence="2 6">Interacts with glycoprotein G2 (By similarity). Part of the GP complex (GP-C) together with glycoprotein G1 and glycoprotein G2 (By similarity). The GP-complex interacts with protein Z, which interacts with ribonucleocapsid; these interactions may induce virion budding (PubMed:17581989).</text>
</comment>
<comment type="subunit">
    <molecule>Glycoprotein G1</molecule>
    <text evidence="2 6">Homotrimer; disulfide-linked. In pre-fusion state, G1 homotrimers bind G2 homotrimers via ionic interactions. Part of the GP complex (GP-C) together with glycoprotein G2 and the stable signal peptide. Interacts with the primary host receptor DAG1 on the cell surface (By similarity). The GP-complex interacts with protein Z, which interacts with ribonucleocapsid; these interactions may induce virion budding (PubMed:17581989).</text>
</comment>
<comment type="subunit">
    <molecule>Glycoprotein G2</molecule>
    <text evidence="2 4 6">Homotrimer (PubMed:16731928). Interacts with the stable signal peptide. In pre-fusion state, G2 homotrimers bind G1 homotrimers via ionic interactions. Part of the GP complex (GP-C) together with glycoprotein G1 and the stable signal peptide. Acidification in the endosome triggers rearrangements, which ultimately leads to a 6 helix bundle formed by the two heptad repeat domains (HR1 and HR2) in post-fusion state. The GP-complex interacts with protein Z, which interacts with ribonucleocapsid; these interactions may induce virion budding (PubMed:17581989).</text>
</comment>
<comment type="subcellular location">
    <molecule>Stable signal peptide</molecule>
    <subcellularLocation>
        <location evidence="2">Virion membrane</location>
        <topology evidence="2">Single-pass type II membrane protein</topology>
    </subcellularLocation>
    <subcellularLocation>
        <location evidence="2">Host endoplasmic reticulum membrane</location>
        <topology evidence="2">Single-pass type II membrane protein</topology>
    </subcellularLocation>
    <subcellularLocation>
        <location evidence="2">Host Golgi apparatus membrane</location>
        <topology evidence="2">Single-pass type II membrane protein</topology>
    </subcellularLocation>
    <subcellularLocation>
        <location evidence="2">Host cell membrane</location>
        <topology evidence="2">Single-pass type II membrane protein</topology>
    </subcellularLocation>
</comment>
<comment type="subcellular location">
    <molecule>Glycoprotein G1</molecule>
    <subcellularLocation>
        <location evidence="2">Virion membrane</location>
        <topology evidence="2">Peripheral membrane protein</topology>
    </subcellularLocation>
    <subcellularLocation>
        <location evidence="2">Host endoplasmic reticulum membrane</location>
        <topology evidence="2">Peripheral membrane protein</topology>
    </subcellularLocation>
    <subcellularLocation>
        <location evidence="2">Host Golgi apparatus membrane</location>
        <topology evidence="2">Peripheral membrane protein</topology>
    </subcellularLocation>
    <subcellularLocation>
        <location evidence="2">Host cell membrane</location>
        <topology evidence="2">Peripheral membrane protein</topology>
    </subcellularLocation>
</comment>
<comment type="subcellular location">
    <molecule>Glycoprotein G2</molecule>
    <subcellularLocation>
        <location evidence="2">Virion membrane</location>
        <topology evidence="2">Single-pass membrane protein</topology>
    </subcellularLocation>
    <subcellularLocation>
        <location evidence="2">Host endoplasmic reticulum membrane</location>
        <topology evidence="2">Single-pass membrane protein</topology>
    </subcellularLocation>
    <subcellularLocation>
        <location evidence="2">Host Golgi apparatus membrane</location>
        <topology evidence="2">Single-pass membrane protein</topology>
    </subcellularLocation>
    <subcellularLocation>
        <location evidence="2">Host cell membrane</location>
        <topology evidence="2">Single-pass membrane protein</topology>
    </subcellularLocation>
    <text evidence="2">Binding to the stable signal peptide masks endogenous ER localization signals in the cytoplasmic domain of G2 to ensure that only the fully assembled, tripartite GP complex is transported for virion assembly.</text>
</comment>
<comment type="domain">
    <molecule>Stable signal peptide</molecule>
    <text evidence="2">The N-terminus is localized at the extracellular side of the GP-C, with a part embedded in the membrane probably.</text>
</comment>
<comment type="domain">
    <molecule>Glycoprotein G2</molecule>
    <text evidence="2">Contains 1 fusion peptide at the N-terminus, 2 heptad repeats domains HR1 and HR2 and, at the C-terminus, a cytoplasmic domain that plays a role in ER location. Also contains a zinc-binding domain that allows SSP retention in the GPC complex by accepting a cysteine from SSP as the fourth ligand.</text>
</comment>
<comment type="PTM">
    <molecule>Pre-glycoprotein polyprotein GP complex</molecule>
    <text evidence="2">Specific enzymatic cleavages in vivo yield mature proteins. GP-C polyprotein is cleaved in the endoplasmic reticulum by the host protease MBTPS1. Only cleaved glycoprotein is incorporated into virions.</text>
</comment>
<comment type="PTM">
    <molecule>Stable signal peptide</molecule>
    <text evidence="2">The SSP remains stably associated with the GP complex following cleavage by signal peptidase and plays crucial roles in the trafficking of GP through the secretory pathway.</text>
</comment>
<comment type="PTM">
    <molecule>Stable signal peptide</molecule>
    <text evidence="3 8">Myristoylation is necessary for GP2-mediated fusion activity (By similarity) (PubMed:39339839). Inhibition of host myristoylation by the compound DDD85646 leads to the abrogation of GP2-mediated fusion upon exposure to low pH and inhibition of viral multiplication (PubMed:39339839).</text>
</comment>
<comment type="similarity">
    <text evidence="2">Belongs to the arenaviridae GPC protein family.</text>
</comment>
<organismHost>
    <name type="scientific">Homo sapiens</name>
    <name type="common">Human</name>
    <dbReference type="NCBI Taxonomy" id="9606"/>
</organismHost>
<organismHost>
    <name type="scientific">Mesocricetus auratus</name>
    <name type="common">Golden hamster</name>
    <dbReference type="NCBI Taxonomy" id="10036"/>
</organismHost>
<organismHost>
    <name type="scientific">Mus musculus</name>
    <name type="common">Mouse</name>
    <dbReference type="NCBI Taxonomy" id="10090"/>
</organismHost>
<organism>
    <name type="scientific">Lymphocytic choriomeningitis virus (strain Armstrong)</name>
    <name type="common">LCMV</name>
    <dbReference type="NCBI Taxonomy" id="11624"/>
    <lineage>
        <taxon>Viruses</taxon>
        <taxon>Riboviria</taxon>
        <taxon>Orthornavirae</taxon>
        <taxon>Negarnaviricota</taxon>
        <taxon>Polyploviricotina</taxon>
        <taxon>Ellioviricetes</taxon>
        <taxon>Bunyavirales</taxon>
        <taxon>Arenaviridae</taxon>
        <taxon>Mammarenavirus</taxon>
        <taxon>Mammarenavirus choriomeningitidis</taxon>
    </lineage>
</organism>
<gene>
    <name evidence="2" type="primary">GPC</name>
    <name type="synonym">GP-C</name>
    <name type="ordered locus">Segment S</name>
</gene>
<reference key="1">
    <citation type="journal article" date="1987" name="Virology">
        <title>Molecular characterization of the genomic S RNA segment from lymphocytic choriomeningitis virus.</title>
        <authorList>
            <person name="Southern P.J."/>
            <person name="Singh M.K."/>
            <person name="Riviere Y."/>
            <person name="Jacoby D.R."/>
            <person name="Buchmeier M.J."/>
            <person name="Oldstone M.B.A."/>
        </authorList>
    </citation>
    <scope>NUCLEOTIDE SEQUENCE [GENOMIC RNA]</scope>
</reference>
<reference key="2">
    <citation type="journal article" date="1988" name="Virology">
        <title>Virus-lymphocyte interactions. IV. Molecular characterization of LCMV Armstrong (CTL+) small genomic segment and that of its variant, Clone 13 (CTL-).</title>
        <authorList>
            <person name="Salvato M."/>
            <person name="Shimomaye E."/>
            <person name="Southern P.J."/>
            <person name="Oldstone M.B.A."/>
        </authorList>
    </citation>
    <scope>NUCLEOTIDE SEQUENCE [GENOMIC RNA]</scope>
    <source>
        <strain>Isolate CTL+</strain>
        <strain>Isolate CTL-</strain>
    </source>
</reference>
<reference key="3">
    <citation type="journal article" date="2005" name="J. Virol.">
        <title>Mutagenesis-induced, large fitness variations with an invariant arenavirus consensus genomic nucleotide sequence.</title>
        <authorList>
            <person name="Grande-Perez A."/>
            <person name="Gomez-Mariano G."/>
            <person name="Lowenstein P.R."/>
            <person name="Domingo E."/>
        </authorList>
    </citation>
    <scope>NUCLEOTIDE SEQUENCE [GENOMIC RNA]</scope>
    <source>
        <strain>Isolate Armstrong 53b</strain>
    </source>
</reference>
<reference key="4">
    <citation type="journal article" date="2006" name="Proc. Natl. Acad. Sci. U.S.A.">
        <title>Recovery of an arenavirus entirely from RNA polymerase I/II-driven cDNA.</title>
        <authorList>
            <person name="Flatz L."/>
            <person name="Bergthaler A."/>
            <person name="de la Torre J.C."/>
            <person name="Pinschewer D.D."/>
        </authorList>
    </citation>
    <scope>NUCLEOTIDE SEQUENCE [GENOMIC RNA]</scope>
    <source>
        <strain>Isolate Armstrong-derived variant Cl13</strain>
    </source>
</reference>
<reference key="5">
    <citation type="journal article" date="1994" name="Virology">
        <title>Acidic pH triggers LCMV membrane fusion activity and conformational change in the glycoprotein spike.</title>
        <authorList>
            <person name="Di Simone C."/>
            <person name="Zandonatti M.A."/>
            <person name="Buchmeier M.J."/>
        </authorList>
    </citation>
    <scope>FUNCTION (GLYCOPROTEIN G2)</scope>
</reference>
<reference key="6">
    <citation type="journal article" date="1998" name="Science">
        <title>Identification of alpha-dystroglycan as a receptor for lymphocytic choriomeningitis virus and Lassa fever virus.</title>
        <authorList>
            <person name="Cao W."/>
            <person name="Henry M.D."/>
            <person name="Borrow P."/>
            <person name="Yamada H."/>
            <person name="Elder J.H."/>
            <person name="Ravkov E.V."/>
            <person name="Nichol S.T."/>
            <person name="Compans R.W."/>
            <person name="Campbell K.P."/>
            <person name="Oldstone M.B.A."/>
        </authorList>
    </citation>
    <scope>FUNCTION (GLYCOPROTEIN G1)</scope>
    <scope>INTERACTION WITH HOST DAG1 (GLYCOPROTEIN G1)</scope>
</reference>
<reference key="7">
    <citation type="journal article" date="2006" name="J. Virol.">
        <title>Identification of an N-terminal trimeric coiled-coil core within arenavirus glycoprotein 2 permits assignment to class I viral fusion proteins.</title>
        <authorList>
            <person name="Eschli B."/>
            <person name="Quirin K."/>
            <person name="Wepf A."/>
            <person name="Weber J."/>
            <person name="Zinkernagel R."/>
            <person name="Hengartner H."/>
        </authorList>
    </citation>
    <scope>SUBUNIT (GLYCOPROTEIN G2)</scope>
    <scope>FUNCTION (GLYCOPROTEIN G2)</scope>
</reference>
<reference key="8">
    <citation type="journal article" date="2007" name="J. Virol.">
        <title>Mapping the landscape of the lymphocytic choriomeningitis virus stable signal peptide reveals novel functional domains.</title>
        <authorList>
            <person name="Saunders A.A."/>
            <person name="Ting J.P.C."/>
            <person name="Meisner J."/>
            <person name="Neuman B.W."/>
            <person name="Perez M."/>
            <person name="de la Torre J.C."/>
            <person name="Buchmeier M.J."/>
        </authorList>
    </citation>
    <scope>FUNCTION (STABLE SIGNAL PEPTIDE)</scope>
    <scope>MUTAGENESIS OF PRO-12; ASP-16; GLU-17; ASN-20; LYS-33; ASN-37; PHE-49 AND GLY-54</scope>
</reference>
<reference key="9">
    <citation type="journal article" date="2007" name="J. Virol.">
        <title>Arenavirus Z-glycoprotein association requires Z myristoylation but not functional RING or late domains.</title>
        <authorList>
            <person name="Capul A.A."/>
            <person name="Perez M."/>
            <person name="Burke E."/>
            <person name="Kunz S."/>
            <person name="Buchmeier M.J."/>
            <person name="de la Torre J.C."/>
        </authorList>
    </citation>
    <scope>INTERACTION WITH Z PROTEIN (STABLE SIGNAL PEPTIDE)</scope>
    <scope>INTERACTION WITH Z PROTEIN (GLYCOPROTEIN 1)</scope>
    <scope>INTERACTION WITH Z PROTEIN (GLYCOPROTEIN 2)</scope>
</reference>
<reference key="10">
    <citation type="journal article" date="2007" name="Mol. Biol. Cell">
        <title>Old World arenavirus infection interferes with the expression of functional alpha-dystroglycan in the host cell.</title>
        <authorList>
            <person name="Rojek J.M."/>
            <person name="Campbell K.P."/>
            <person name="Oldstone M.B."/>
            <person name="Kunz S."/>
        </authorList>
    </citation>
    <scope>FUNCTION (GLYCOPROTEIN G1)</scope>
</reference>
<reference key="11">
    <citation type="journal article" date="2024" name="Viruses">
        <title>Cellular N-Myristoyl Transferases Are Required for Mammarenavirus Multiplication.</title>
        <authorList>
            <person name="Witwit H."/>
            <person name="Betancourt C.A."/>
            <person name="Cubitt B."/>
            <person name="Khafaji R."/>
            <person name="Kowalski H."/>
            <person name="Jackson N."/>
            <person name="Ye C."/>
            <person name="Martinez-Sobrido L."/>
            <person name="de la Torre J.C."/>
        </authorList>
    </citation>
    <scope>MYRISTOYLATION (STABLE SIGNAL PEPTIDE)</scope>
</reference>
<reference key="12">
    <citation type="journal article" date="2017" name="PLoS ONE">
        <title>Crystal structures of H-2Db in complex with the LCMV-derived peptides GP92 and GP392 explain pleiotropic effects of glycosylation on antigen presentation and immunogenicity.</title>
        <authorList>
            <person name="Hafstrand I."/>
            <person name="Badia-Martinez D."/>
            <person name="Josey B.J."/>
            <person name="Norstroem M."/>
            <person name="Buratto J."/>
            <person name="Pellegrino S."/>
            <person name="Duru A.D."/>
            <person name="Sandalova T."/>
            <person name="Achour A."/>
        </authorList>
    </citation>
    <scope>X-RAY CRYSTALLOGRAPHY (2.40 ANGSTROMS) OF 92-101</scope>
</reference>
<keyword id="KW-0002">3D-structure</keyword>
<keyword id="KW-1015">Disulfide bond</keyword>
<keyword id="KW-1170">Fusion of virus membrane with host endosomal membrane</keyword>
<keyword id="KW-1168">Fusion of virus membrane with host membrane</keyword>
<keyword id="KW-0325">Glycoprotein</keyword>
<keyword id="KW-1032">Host cell membrane</keyword>
<keyword id="KW-1038">Host endoplasmic reticulum</keyword>
<keyword id="KW-1040">Host Golgi apparatus</keyword>
<keyword id="KW-1043">Host membrane</keyword>
<keyword id="KW-0945">Host-virus interaction</keyword>
<keyword id="KW-0449">Lipoprotein</keyword>
<keyword id="KW-0472">Membrane</keyword>
<keyword id="KW-0479">Metal-binding</keyword>
<keyword id="KW-0519">Myristate</keyword>
<keyword id="KW-1185">Reference proteome</keyword>
<keyword id="KW-0812">Transmembrane</keyword>
<keyword id="KW-1133">Transmembrane helix</keyword>
<keyword id="KW-1161">Viral attachment to host cell</keyword>
<keyword id="KW-0261">Viral envelope protein</keyword>
<keyword id="KW-1162">Viral penetration into host cytoplasm</keyword>
<keyword id="KW-0946">Virion</keyword>
<keyword id="KW-1164">Virus endocytosis by host</keyword>
<keyword id="KW-1160">Virus entry into host cell</keyword>
<keyword id="KW-0862">Zinc</keyword>
<sequence length="498" mass="56131">MGQIVTMFEALPHIIDEVINIVIIVLIVITGIKAVYNFATCGIFALISFLLLAGRSCGMYGLKGPDIYKGVYQFKSVEFDMSHLNLTMPNACSANNSHHYISMGTSGLELTFTNDSIISHNFCNLTSAFNKKTFDHTLMSIVSSLHLSIRGNSNYKAVSCDFNNGITIQYNLTFSDAQSAQSQCRTFRGRVLDMFRTAFGGKYMRSGWGWTGSDGKTTWCSQTSYQYLIIQNRTWENHCTYAGPFGMSRILLSQEKTKFFTRRLAGTFTWTLSDSSGVENPGGYCLTKWMILAAELKCFGNTAVAKCNVNHDAEFCDMLRLIDYNKAALSKFKEDVESALHLFKTTVNSLISDQLLMRNHLRDLMGVPYCNYSKFWYLEHAKTGETSVPKCWLVTNGSYLNETHFSDQIEQEADNMITEMLRKDYIKRQGSTPLALMDLLMFSTSAYLVSIFLHLVKIPTHRHIKGGSCPKPHRLTNKGICSCGAFKVPGVKTVWKRR</sequence>
<feature type="initiator methionine" description="Removed; by host" evidence="2">
    <location>
        <position position="1"/>
    </location>
</feature>
<feature type="chain" id="PRO_0000356255" description="Pre-glycoprotein polyprotein GP complex" evidence="2">
    <location>
        <begin position="2"/>
        <end position="498"/>
    </location>
</feature>
<feature type="chain" id="PRO_0000356256" description="Stable signal peptide" evidence="2">
    <location>
        <begin position="2"/>
        <end position="58"/>
    </location>
</feature>
<feature type="chain" id="PRO_0000036603" description="Glycoprotein G1" evidence="2">
    <location>
        <begin position="59"/>
        <end position="265"/>
    </location>
</feature>
<feature type="chain" id="PRO_0000036604" description="Glycoprotein G2" evidence="2">
    <location>
        <begin position="266"/>
        <end position="498"/>
    </location>
</feature>
<feature type="topological domain" description="Extracellular" evidence="2">
    <location>
        <begin position="2"/>
        <end position="17"/>
    </location>
</feature>
<feature type="transmembrane region" description="Helical" evidence="2">
    <location>
        <begin position="18"/>
        <end position="33"/>
    </location>
</feature>
<feature type="topological domain" description="Cytoplasmic" evidence="2">
    <location>
        <begin position="34"/>
        <end position="58"/>
    </location>
</feature>
<feature type="topological domain" description="Extracellular" evidence="2">
    <location>
        <begin position="59"/>
        <end position="438"/>
    </location>
</feature>
<feature type="transmembrane region" description="Helical" evidence="2">
    <location>
        <begin position="439"/>
        <end position="459"/>
    </location>
</feature>
<feature type="topological domain" description="Cytoplasmic" evidence="2">
    <location>
        <begin position="460"/>
        <end position="498"/>
    </location>
</feature>
<feature type="binding site" evidence="2">
    <location>
        <position position="57"/>
    </location>
    <ligand>
        <name>Zn(2+)</name>
        <dbReference type="ChEBI" id="CHEBI:29105"/>
        <label>1</label>
    </ligand>
</feature>
<feature type="binding site" evidence="2">
    <location>
        <position position="461"/>
    </location>
    <ligand>
        <name>Zn(2+)</name>
        <dbReference type="ChEBI" id="CHEBI:29105"/>
        <label>2</label>
    </ligand>
</feature>
<feature type="binding site" evidence="2">
    <location>
        <position position="463"/>
    </location>
    <ligand>
        <name>Zn(2+)</name>
        <dbReference type="ChEBI" id="CHEBI:29105"/>
        <label>2</label>
    </ligand>
</feature>
<feature type="binding site" evidence="2">
    <location>
        <position position="469"/>
    </location>
    <ligand>
        <name>Zn(2+)</name>
        <dbReference type="ChEBI" id="CHEBI:29105"/>
        <label>2</label>
    </ligand>
</feature>
<feature type="binding site" evidence="2">
    <location>
        <position position="473"/>
    </location>
    <ligand>
        <name>Zn(2+)</name>
        <dbReference type="ChEBI" id="CHEBI:29105"/>
        <label>1</label>
    </ligand>
</feature>
<feature type="binding site" evidence="2">
    <location>
        <position position="481"/>
    </location>
    <ligand>
        <name>Zn(2+)</name>
        <dbReference type="ChEBI" id="CHEBI:29105"/>
        <label>1</label>
    </ligand>
</feature>
<feature type="binding site" evidence="2">
    <location>
        <position position="483"/>
    </location>
    <ligand>
        <name>Zn(2+)</name>
        <dbReference type="ChEBI" id="CHEBI:29105"/>
        <label>1</label>
    </ligand>
</feature>
<feature type="site" description="Important for GP-C-mediated membrane fusion" evidence="1">
    <location>
        <position position="33"/>
    </location>
</feature>
<feature type="site" description="Cleavage; by host signal peptidase" evidence="2">
    <location>
        <begin position="58"/>
        <end position="59"/>
    </location>
</feature>
<feature type="site" description="Cleavage; by host MBTPS1" evidence="2">
    <location>
        <begin position="265"/>
        <end position="266"/>
    </location>
</feature>
<feature type="lipid moiety-binding region" description="N-myristoyl glycine; by host" evidence="2">
    <location>
        <position position="2"/>
    </location>
</feature>
<feature type="glycosylation site" description="N-linked (GlcNAc...) asparagine; by host" evidence="2">
    <location>
        <position position="85"/>
    </location>
</feature>
<feature type="glycosylation site" description="N-linked (GlcNAc...) asparagine; by host" evidence="2">
    <location>
        <position position="95"/>
    </location>
</feature>
<feature type="glycosylation site" description="N-linked (GlcNAc...) asparagine; by host" evidence="2">
    <location>
        <position position="114"/>
    </location>
</feature>
<feature type="glycosylation site" description="N-linked (GlcNAc...) asparagine; by host" evidence="2">
    <location>
        <position position="124"/>
    </location>
</feature>
<feature type="glycosylation site" description="N-linked (GlcNAc...) asparagine; by host" evidence="2">
    <location>
        <position position="171"/>
    </location>
</feature>
<feature type="glycosylation site" description="N-linked (GlcNAc...) asparagine; by host" evidence="2">
    <location>
        <position position="232"/>
    </location>
</feature>
<feature type="glycosylation site" description="N-linked (GlcNAc...) asparagine; by host" evidence="2">
    <location>
        <position position="371"/>
    </location>
</feature>
<feature type="glycosylation site" description="N-linked (GlcNAc...) asparagine; by host" evidence="2">
    <location>
        <position position="396"/>
    </location>
</feature>
<feature type="glycosylation site" description="N-linked (GlcNAc...) asparagine; by host" evidence="2">
    <location>
        <position position="401"/>
    </location>
</feature>
<feature type="disulfide bond" evidence="2">
    <location>
        <begin position="92"/>
        <end position="239"/>
    </location>
</feature>
<feature type="disulfide bond" evidence="2">
    <location>
        <begin position="123"/>
        <end position="160"/>
    </location>
</feature>
<feature type="disulfide bond" evidence="2">
    <location>
        <begin position="184"/>
        <end position="220"/>
    </location>
</feature>
<feature type="disulfide bond" evidence="2">
    <location>
        <begin position="285"/>
        <end position="298"/>
    </location>
</feature>
<feature type="disulfide bond" evidence="2">
    <location>
        <begin position="307"/>
        <end position="316"/>
    </location>
</feature>
<feature type="disulfide bond" evidence="2">
    <location>
        <begin position="370"/>
        <end position="391"/>
    </location>
</feature>
<feature type="sequence variant" description="In strain: Isolate Armstrong 53b.">
    <original>D</original>
    <variation>N</variation>
    <location>
        <position position="176"/>
    </location>
</feature>
<feature type="sequence variant" description="In strain: Isolate CTL- and Isolate Armstrong-derived variant Cl13.">
    <original>F</original>
    <variation>L</variation>
    <location>
        <position position="260"/>
    </location>
</feature>
<feature type="sequence variant" description="In strain: Isolate Armstrong 53b and Isolate Armstrong-derived variant Cl13.">
    <original>A</original>
    <variation>E</variation>
    <location>
        <position position="313"/>
    </location>
</feature>
<feature type="mutagenesis site" description="99% loss of virus infectivity." evidence="5">
    <original>P</original>
    <variation>A</variation>
    <location>
        <position position="12"/>
    </location>
</feature>
<feature type="mutagenesis site" description="96% loss of virus infectivity." evidence="5">
    <original>P</original>
    <variation>G</variation>
    <location>
        <position position="12"/>
    </location>
</feature>
<feature type="mutagenesis site" description="More than 99% loss of infectivity; when associated with A-17." evidence="5">
    <original>D</original>
    <variation>A</variation>
    <location>
        <position position="16"/>
    </location>
</feature>
<feature type="mutagenesis site" description="More than 99% loss of infectivity; when associated with K-17." evidence="5">
    <original>D</original>
    <variation>K</variation>
    <location>
        <position position="16"/>
    </location>
</feature>
<feature type="mutagenesis site" description="More than 99% loss of infectivity; when associated with A-16." evidence="5">
    <original>E</original>
    <variation>A</variation>
    <location>
        <position position="17"/>
    </location>
</feature>
<feature type="mutagenesis site" description="More than 99% loss of infectivity; when associated with K-16." evidence="5">
    <original>E</original>
    <variation>K</variation>
    <location>
        <position position="17"/>
    </location>
</feature>
<feature type="mutagenesis site" description="99% loss of infectivity." evidence="5">
    <original>N</original>
    <variation>A</variation>
    <location>
        <position position="20"/>
    </location>
</feature>
<feature type="mutagenesis site" description="91% loss of infectivity." evidence="5">
    <original>N</original>
    <variation>K</variation>
    <location>
        <position position="20"/>
    </location>
</feature>
<feature type="mutagenesis site" description="98% loss of infectivity." evidence="5">
    <original>N</original>
    <variation>Q</variation>
    <location>
        <position position="20"/>
    </location>
</feature>
<feature type="mutagenesis site" description="More than 99% loss of infectivity." evidence="5">
    <original>K</original>
    <variation>A</variation>
    <location>
        <position position="33"/>
    </location>
</feature>
<feature type="mutagenesis site" description="More than 99% loss of infectivity." evidence="5">
    <original>K</original>
    <variation>D</variation>
    <location>
        <position position="33"/>
    </location>
</feature>
<feature type="mutagenesis site" description="97% loss of infectivity." evidence="5">
    <original>N</original>
    <variation>A</variation>
    <location>
        <position position="37"/>
    </location>
</feature>
<feature type="mutagenesis site" description="92% loss of infectivity." evidence="5">
    <original>N</original>
    <variation>K</variation>
    <location>
        <position position="37"/>
    </location>
</feature>
<feature type="mutagenesis site" description="7% loss of infectivity." evidence="5">
    <original>N</original>
    <variation>Q</variation>
    <location>
        <position position="37"/>
    </location>
</feature>
<feature type="mutagenesis site" description="More than 99% loss of infectivity." evidence="5">
    <original>F</original>
    <variation>A</variation>
    <location>
        <position position="49"/>
    </location>
</feature>
<feature type="mutagenesis site" description="95% loss of ionfectivity." evidence="5">
    <original>F</original>
    <variation>L</variation>
    <location>
        <position position="49"/>
    </location>
</feature>
<feature type="mutagenesis site" description="More than 99% loss of infectivity." evidence="5">
    <original>G</original>
    <variation>A</variation>
    <location>
        <position position="54"/>
    </location>
</feature>
<feature type="sequence conflict" description="In Ref. 2; AAA46256." ref="2">
    <original>A</original>
    <variation>R</variation>
    <location>
        <position position="177"/>
    </location>
</feature>
<evidence type="ECO:0000250" key="1">
    <source>
        <dbReference type="UniProtKB" id="P26313"/>
    </source>
</evidence>
<evidence type="ECO:0000255" key="2">
    <source>
        <dbReference type="HAMAP-Rule" id="MF_04084"/>
    </source>
</evidence>
<evidence type="ECO:0000255" key="3">
    <source>
        <dbReference type="HAMAP-Rule" id="MF_04087"/>
    </source>
</evidence>
<evidence type="ECO:0000269" key="4">
    <source>
    </source>
</evidence>
<evidence type="ECO:0000269" key="5">
    <source>
    </source>
</evidence>
<evidence type="ECO:0000269" key="6">
    <source>
    </source>
</evidence>
<evidence type="ECO:0000269" key="7">
    <source>
    </source>
</evidence>
<evidence type="ECO:0000269" key="8">
    <source>
    </source>
</evidence>
<evidence type="ECO:0000269" key="9">
    <source>
    </source>
</evidence>
<accession>P09991</accession>
<accession>Q27V72</accession>
<accession>Q49K87</accession>